<comment type="function">
    <text evidence="2">Nucleoside monophosphate (NMP) kinase that catalyzes the reversible transfer of the terminal phosphate group between nucleoside triphosphates and monophosphates. Active on AMP and dAMP with ATP as a donor. When GTP is used as phosphate donor, the enzyme phosphorylates AMP, CMP, and to a small extent dCMP. Also displays broad nucleoside diphosphate kinase activity.</text>
</comment>
<comment type="catalytic activity">
    <reaction evidence="2">
        <text>AMP + ATP = 2 ADP</text>
        <dbReference type="Rhea" id="RHEA:12973"/>
        <dbReference type="ChEBI" id="CHEBI:30616"/>
        <dbReference type="ChEBI" id="CHEBI:456215"/>
        <dbReference type="ChEBI" id="CHEBI:456216"/>
        <dbReference type="EC" id="2.7.4.3"/>
    </reaction>
</comment>
<comment type="catalytic activity">
    <reaction evidence="2">
        <text>a 2'-deoxyribonucleoside 5'-diphosphate + ATP = a 2'-deoxyribonucleoside 5'-triphosphate + ADP</text>
        <dbReference type="Rhea" id="RHEA:44640"/>
        <dbReference type="ChEBI" id="CHEBI:30616"/>
        <dbReference type="ChEBI" id="CHEBI:61560"/>
        <dbReference type="ChEBI" id="CHEBI:73316"/>
        <dbReference type="ChEBI" id="CHEBI:456216"/>
        <dbReference type="EC" id="2.7.4.6"/>
    </reaction>
</comment>
<comment type="catalytic activity">
    <reaction evidence="2">
        <text>a ribonucleoside 5'-diphosphate + ATP = a ribonucleoside 5'-triphosphate + ADP</text>
        <dbReference type="Rhea" id="RHEA:18113"/>
        <dbReference type="ChEBI" id="CHEBI:30616"/>
        <dbReference type="ChEBI" id="CHEBI:57930"/>
        <dbReference type="ChEBI" id="CHEBI:61557"/>
        <dbReference type="ChEBI" id="CHEBI:456216"/>
        <dbReference type="EC" id="2.7.4.6"/>
    </reaction>
</comment>
<comment type="subunit">
    <text evidence="1 3">Monomer. Interacts with YWHAZ (PubMed:16959763).</text>
</comment>
<comment type="subcellular location">
    <subcellularLocation>
        <location evidence="2">Cytoplasm</location>
    </subcellularLocation>
</comment>
<comment type="alternative products">
    <event type="alternative splicing"/>
    <isoform>
        <id>Q920P5-1</id>
        <name>1</name>
        <sequence type="displayed"/>
    </isoform>
    <isoform>
        <id>Q920P5-2</id>
        <name>2</name>
        <sequence type="described" ref="VSP_037880"/>
    </isoform>
</comment>
<comment type="tissue specificity">
    <text evidence="2">Brain specific.</text>
</comment>
<comment type="similarity">
    <text evidence="5">Belongs to the adenylate kinase family.</text>
</comment>
<keyword id="KW-0025">Alternative splicing</keyword>
<keyword id="KW-0067">ATP-binding</keyword>
<keyword id="KW-0963">Cytoplasm</keyword>
<keyword id="KW-0418">Kinase</keyword>
<keyword id="KW-0547">Nucleotide-binding</keyword>
<keyword id="KW-1185">Reference proteome</keyword>
<keyword id="KW-0808">Transferase</keyword>
<proteinExistence type="evidence at protein level"/>
<dbReference type="EC" id="2.7.4.3"/>
<dbReference type="EC" id="2.7.4.6"/>
<dbReference type="EMBL" id="AB060081">
    <property type="protein sequence ID" value="BAB69859.1"/>
    <property type="molecule type" value="mRNA"/>
</dbReference>
<dbReference type="EMBL" id="AK053807">
    <property type="status" value="NOT_ANNOTATED_CDS"/>
    <property type="molecule type" value="mRNA"/>
</dbReference>
<dbReference type="EMBL" id="AC111139">
    <property type="status" value="NOT_ANNOTATED_CDS"/>
    <property type="molecule type" value="Genomic_DNA"/>
</dbReference>
<dbReference type="EMBL" id="AC116720">
    <property type="status" value="NOT_ANNOTATED_CDS"/>
    <property type="molecule type" value="Genomic_DNA"/>
</dbReference>
<dbReference type="CCDS" id="CCDS38675.1">
    <molecule id="Q920P5-1"/>
</dbReference>
<dbReference type="RefSeq" id="NP_001074746.1">
    <molecule id="Q920P5-1"/>
    <property type="nucleotide sequence ID" value="NM_001081277.3"/>
</dbReference>
<dbReference type="SMR" id="Q920P5"/>
<dbReference type="BioGRID" id="230921">
    <property type="interactions" value="6"/>
</dbReference>
<dbReference type="FunCoup" id="Q920P5">
    <property type="interactions" value="644"/>
</dbReference>
<dbReference type="IntAct" id="Q920P5">
    <property type="interactions" value="2"/>
</dbReference>
<dbReference type="STRING" id="10090.ENSMUSP00000042785"/>
<dbReference type="iPTMnet" id="Q920P5"/>
<dbReference type="PhosphoSitePlus" id="Q920P5"/>
<dbReference type="SwissPalm" id="Q920P5"/>
<dbReference type="PaxDb" id="10090-ENSMUSP00000042785"/>
<dbReference type="PeptideAtlas" id="Q920P5"/>
<dbReference type="ProteomicsDB" id="269238">
    <molecule id="Q920P5-1"/>
</dbReference>
<dbReference type="ProteomicsDB" id="269239">
    <molecule id="Q920P5-2"/>
</dbReference>
<dbReference type="Pumba" id="Q920P5"/>
<dbReference type="Antibodypedia" id="19726">
    <property type="antibodies" value="388 antibodies from 28 providers"/>
</dbReference>
<dbReference type="DNASU" id="229949"/>
<dbReference type="Ensembl" id="ENSMUST00000045262.11">
    <molecule id="Q920P5-1"/>
    <property type="protein sequence ID" value="ENSMUSP00000042785.7"/>
    <property type="gene ID" value="ENSMUSG00000039058.12"/>
</dbReference>
<dbReference type="GeneID" id="229949"/>
<dbReference type="KEGG" id="mmu:229949"/>
<dbReference type="UCSC" id="uc008rtq.1">
    <molecule id="Q920P5-1"/>
    <property type="organism name" value="mouse"/>
</dbReference>
<dbReference type="AGR" id="MGI:2677491"/>
<dbReference type="CTD" id="26289"/>
<dbReference type="MGI" id="MGI:2677491">
    <property type="gene designation" value="Ak5"/>
</dbReference>
<dbReference type="VEuPathDB" id="HostDB:ENSMUSG00000039058"/>
<dbReference type="eggNOG" id="KOG3079">
    <property type="taxonomic scope" value="Eukaryota"/>
</dbReference>
<dbReference type="GeneTree" id="ENSGT00940000155917"/>
<dbReference type="HOGENOM" id="CLU_034712_1_0_1"/>
<dbReference type="InParanoid" id="Q920P5"/>
<dbReference type="OMA" id="ETHIVHQ"/>
<dbReference type="OrthoDB" id="6436361at2759"/>
<dbReference type="PhylomeDB" id="Q920P5"/>
<dbReference type="TreeFam" id="TF313747"/>
<dbReference type="Reactome" id="R-MMU-499943">
    <property type="pathway name" value="Interconversion of nucleotide di- and triphosphates"/>
</dbReference>
<dbReference type="BioGRID-ORCS" id="229949">
    <property type="hits" value="4 hits in 78 CRISPR screens"/>
</dbReference>
<dbReference type="ChiTaRS" id="Ak5">
    <property type="organism name" value="mouse"/>
</dbReference>
<dbReference type="PRO" id="PR:Q920P5"/>
<dbReference type="Proteomes" id="UP000000589">
    <property type="component" value="Chromosome 3"/>
</dbReference>
<dbReference type="RNAct" id="Q920P5">
    <property type="molecule type" value="protein"/>
</dbReference>
<dbReference type="Bgee" id="ENSMUSG00000039058">
    <property type="expression patterns" value="Expressed in dentate gyrus of hippocampal formation granule cell and 151 other cell types or tissues"/>
</dbReference>
<dbReference type="ExpressionAtlas" id="Q920P5">
    <property type="expression patterns" value="baseline and differential"/>
</dbReference>
<dbReference type="GO" id="GO:0034451">
    <property type="term" value="C:centriolar satellite"/>
    <property type="evidence" value="ECO:0007669"/>
    <property type="project" value="Ensembl"/>
</dbReference>
<dbReference type="GO" id="GO:0005829">
    <property type="term" value="C:cytosol"/>
    <property type="evidence" value="ECO:0007669"/>
    <property type="project" value="Ensembl"/>
</dbReference>
<dbReference type="GO" id="GO:0004017">
    <property type="term" value="F:adenylate kinase activity"/>
    <property type="evidence" value="ECO:0007669"/>
    <property type="project" value="UniProtKB-EC"/>
</dbReference>
<dbReference type="GO" id="GO:0005524">
    <property type="term" value="F:ATP binding"/>
    <property type="evidence" value="ECO:0007669"/>
    <property type="project" value="UniProtKB-KW"/>
</dbReference>
<dbReference type="GO" id="GO:0004550">
    <property type="term" value="F:nucleoside diphosphate kinase activity"/>
    <property type="evidence" value="ECO:0000250"/>
    <property type="project" value="UniProtKB"/>
</dbReference>
<dbReference type="GO" id="GO:0046034">
    <property type="term" value="P:ATP metabolic process"/>
    <property type="evidence" value="ECO:0007669"/>
    <property type="project" value="InterPro"/>
</dbReference>
<dbReference type="CDD" id="cd01428">
    <property type="entry name" value="ADK"/>
    <property type="match status" value="2"/>
</dbReference>
<dbReference type="CDD" id="cd22978">
    <property type="entry name" value="DD_AK5"/>
    <property type="match status" value="1"/>
</dbReference>
<dbReference type="FunFam" id="3.40.50.300:FF:000583">
    <property type="entry name" value="Adenylate kinase isoenzyme 5"/>
    <property type="match status" value="1"/>
</dbReference>
<dbReference type="Gene3D" id="3.40.50.300">
    <property type="entry name" value="P-loop containing nucleotide triphosphate hydrolases"/>
    <property type="match status" value="2"/>
</dbReference>
<dbReference type="HAMAP" id="MF_00235">
    <property type="entry name" value="Adenylate_kinase_Adk"/>
    <property type="match status" value="2"/>
</dbReference>
<dbReference type="InterPro" id="IPR000850">
    <property type="entry name" value="Adenylat/UMP-CMP_kin"/>
</dbReference>
<dbReference type="InterPro" id="IPR033690">
    <property type="entry name" value="Adenylat_kinase_CS"/>
</dbReference>
<dbReference type="InterPro" id="IPR006267">
    <property type="entry name" value="AK1/5"/>
</dbReference>
<dbReference type="InterPro" id="IPR027417">
    <property type="entry name" value="P-loop_NTPase"/>
</dbReference>
<dbReference type="NCBIfam" id="TIGR01360">
    <property type="entry name" value="aden_kin_iso1"/>
    <property type="match status" value="1"/>
</dbReference>
<dbReference type="PANTHER" id="PTHR23359">
    <property type="entry name" value="NUCLEOTIDE KINASE"/>
    <property type="match status" value="1"/>
</dbReference>
<dbReference type="Pfam" id="PF00406">
    <property type="entry name" value="ADK"/>
    <property type="match status" value="2"/>
</dbReference>
<dbReference type="PRINTS" id="PR00094">
    <property type="entry name" value="ADENYLTKNASE"/>
</dbReference>
<dbReference type="SUPFAM" id="SSF47391">
    <property type="entry name" value="Dimerization-anchoring domain of cAMP-dependent PK regulatory subunit"/>
    <property type="match status" value="1"/>
</dbReference>
<dbReference type="SUPFAM" id="SSF52540">
    <property type="entry name" value="P-loop containing nucleoside triphosphate hydrolases"/>
    <property type="match status" value="2"/>
</dbReference>
<dbReference type="PROSITE" id="PS00113">
    <property type="entry name" value="ADENYLATE_KINASE"/>
    <property type="match status" value="2"/>
</dbReference>
<sequence length="562" mass="63323">MNTNDAKEYLARRDIPQLFESLLNGLMCSKPEDPIEYLETCLQKVKELGGCDKVKWDTFVSQEKKTLPPLNGGQSRRSFLRNVMPENSNFPYRRYDRLPPIHQFSIESDTDLSETAELIEEYEVFDPTRPRPKIILVIGGPGSGKGTQSLKIAERYGFQYISVGELLRKKIHSASSNRKWSLIAKIITNGELAPQETTITEIKQKLMQIPDEEGIVIDGFPRDVAQALSFEDQICTPDLVVFLACANQRLKERLQKRAEQQGRPDDNLKATQRRLVNFKQNAAPLVKYFQEKGLIVTFDADRDEDAVFHDISVAVDSKLFPNKEAPMDSSDLDPSMMFDAGEIIDTGSDYDNQDDDQLNVFGEDTEGGFMEDLRKCKIIFLMGGPGSGKGTQCEKLAEKYGFTHLSTGELLRQELTSESERSKLIRDIMERGDLVPSGVVLELLKEAMVASLGNTKGFLIDGYPREVKQGEEFGRRIGDPHLVICMDCSADTMTNRLLQRSQSSQRGEDGAKSIAKRLEAYHRASIPVVTYYERKTQLRKVNAEGTPEQVFLQLCTAIDSVF</sequence>
<organism>
    <name type="scientific">Mus musculus</name>
    <name type="common">Mouse</name>
    <dbReference type="NCBI Taxonomy" id="10090"/>
    <lineage>
        <taxon>Eukaryota</taxon>
        <taxon>Metazoa</taxon>
        <taxon>Chordata</taxon>
        <taxon>Craniata</taxon>
        <taxon>Vertebrata</taxon>
        <taxon>Euteleostomi</taxon>
        <taxon>Mammalia</taxon>
        <taxon>Eutheria</taxon>
        <taxon>Euarchontoglires</taxon>
        <taxon>Glires</taxon>
        <taxon>Rodentia</taxon>
        <taxon>Myomorpha</taxon>
        <taxon>Muroidea</taxon>
        <taxon>Muridae</taxon>
        <taxon>Murinae</taxon>
        <taxon>Mus</taxon>
        <taxon>Mus</taxon>
    </lineage>
</organism>
<gene>
    <name type="primary">Ak5</name>
</gene>
<reference key="1">
    <citation type="submission" date="2001-04" db="EMBL/GenBank/DDBJ databases">
        <title>Adenylate kinase isozyme 5.</title>
        <authorList>
            <person name="Noma T."/>
        </authorList>
    </citation>
    <scope>NUCLEOTIDE SEQUENCE [MRNA] (ISOFORM 2)</scope>
    <source>
        <tissue>Brain</tissue>
    </source>
</reference>
<reference key="2">
    <citation type="journal article" date="2005" name="Science">
        <title>The transcriptional landscape of the mammalian genome.</title>
        <authorList>
            <person name="Carninci P."/>
            <person name="Kasukawa T."/>
            <person name="Katayama S."/>
            <person name="Gough J."/>
            <person name="Frith M.C."/>
            <person name="Maeda N."/>
            <person name="Oyama R."/>
            <person name="Ravasi T."/>
            <person name="Lenhard B."/>
            <person name="Wells C."/>
            <person name="Kodzius R."/>
            <person name="Shimokawa K."/>
            <person name="Bajic V.B."/>
            <person name="Brenner S.E."/>
            <person name="Batalov S."/>
            <person name="Forrest A.R."/>
            <person name="Zavolan M."/>
            <person name="Davis M.J."/>
            <person name="Wilming L.G."/>
            <person name="Aidinis V."/>
            <person name="Allen J.E."/>
            <person name="Ambesi-Impiombato A."/>
            <person name="Apweiler R."/>
            <person name="Aturaliya R.N."/>
            <person name="Bailey T.L."/>
            <person name="Bansal M."/>
            <person name="Baxter L."/>
            <person name="Beisel K.W."/>
            <person name="Bersano T."/>
            <person name="Bono H."/>
            <person name="Chalk A.M."/>
            <person name="Chiu K.P."/>
            <person name="Choudhary V."/>
            <person name="Christoffels A."/>
            <person name="Clutterbuck D.R."/>
            <person name="Crowe M.L."/>
            <person name="Dalla E."/>
            <person name="Dalrymple B.P."/>
            <person name="de Bono B."/>
            <person name="Della Gatta G."/>
            <person name="di Bernardo D."/>
            <person name="Down T."/>
            <person name="Engstrom P."/>
            <person name="Fagiolini M."/>
            <person name="Faulkner G."/>
            <person name="Fletcher C.F."/>
            <person name="Fukushima T."/>
            <person name="Furuno M."/>
            <person name="Futaki S."/>
            <person name="Gariboldi M."/>
            <person name="Georgii-Hemming P."/>
            <person name="Gingeras T.R."/>
            <person name="Gojobori T."/>
            <person name="Green R.E."/>
            <person name="Gustincich S."/>
            <person name="Harbers M."/>
            <person name="Hayashi Y."/>
            <person name="Hensch T.K."/>
            <person name="Hirokawa N."/>
            <person name="Hill D."/>
            <person name="Huminiecki L."/>
            <person name="Iacono M."/>
            <person name="Ikeo K."/>
            <person name="Iwama A."/>
            <person name="Ishikawa T."/>
            <person name="Jakt M."/>
            <person name="Kanapin A."/>
            <person name="Katoh M."/>
            <person name="Kawasawa Y."/>
            <person name="Kelso J."/>
            <person name="Kitamura H."/>
            <person name="Kitano H."/>
            <person name="Kollias G."/>
            <person name="Krishnan S.P."/>
            <person name="Kruger A."/>
            <person name="Kummerfeld S.K."/>
            <person name="Kurochkin I.V."/>
            <person name="Lareau L.F."/>
            <person name="Lazarevic D."/>
            <person name="Lipovich L."/>
            <person name="Liu J."/>
            <person name="Liuni S."/>
            <person name="McWilliam S."/>
            <person name="Madan Babu M."/>
            <person name="Madera M."/>
            <person name="Marchionni L."/>
            <person name="Matsuda H."/>
            <person name="Matsuzawa S."/>
            <person name="Miki H."/>
            <person name="Mignone F."/>
            <person name="Miyake S."/>
            <person name="Morris K."/>
            <person name="Mottagui-Tabar S."/>
            <person name="Mulder N."/>
            <person name="Nakano N."/>
            <person name="Nakauchi H."/>
            <person name="Ng P."/>
            <person name="Nilsson R."/>
            <person name="Nishiguchi S."/>
            <person name="Nishikawa S."/>
            <person name="Nori F."/>
            <person name="Ohara O."/>
            <person name="Okazaki Y."/>
            <person name="Orlando V."/>
            <person name="Pang K.C."/>
            <person name="Pavan W.J."/>
            <person name="Pavesi G."/>
            <person name="Pesole G."/>
            <person name="Petrovsky N."/>
            <person name="Piazza S."/>
            <person name="Reed J."/>
            <person name="Reid J.F."/>
            <person name="Ring B.Z."/>
            <person name="Ringwald M."/>
            <person name="Rost B."/>
            <person name="Ruan Y."/>
            <person name="Salzberg S.L."/>
            <person name="Sandelin A."/>
            <person name="Schneider C."/>
            <person name="Schoenbach C."/>
            <person name="Sekiguchi K."/>
            <person name="Semple C.A."/>
            <person name="Seno S."/>
            <person name="Sessa L."/>
            <person name="Sheng Y."/>
            <person name="Shibata Y."/>
            <person name="Shimada H."/>
            <person name="Shimada K."/>
            <person name="Silva D."/>
            <person name="Sinclair B."/>
            <person name="Sperling S."/>
            <person name="Stupka E."/>
            <person name="Sugiura K."/>
            <person name="Sultana R."/>
            <person name="Takenaka Y."/>
            <person name="Taki K."/>
            <person name="Tammoja K."/>
            <person name="Tan S.L."/>
            <person name="Tang S."/>
            <person name="Taylor M.S."/>
            <person name="Tegner J."/>
            <person name="Teichmann S.A."/>
            <person name="Ueda H.R."/>
            <person name="van Nimwegen E."/>
            <person name="Verardo R."/>
            <person name="Wei C.L."/>
            <person name="Yagi K."/>
            <person name="Yamanishi H."/>
            <person name="Zabarovsky E."/>
            <person name="Zhu S."/>
            <person name="Zimmer A."/>
            <person name="Hide W."/>
            <person name="Bult C."/>
            <person name="Grimmond S.M."/>
            <person name="Teasdale R.D."/>
            <person name="Liu E.T."/>
            <person name="Brusic V."/>
            <person name="Quackenbush J."/>
            <person name="Wahlestedt C."/>
            <person name="Mattick J.S."/>
            <person name="Hume D.A."/>
            <person name="Kai C."/>
            <person name="Sasaki D."/>
            <person name="Tomaru Y."/>
            <person name="Fukuda S."/>
            <person name="Kanamori-Katayama M."/>
            <person name="Suzuki M."/>
            <person name="Aoki J."/>
            <person name="Arakawa T."/>
            <person name="Iida J."/>
            <person name="Imamura K."/>
            <person name="Itoh M."/>
            <person name="Kato T."/>
            <person name="Kawaji H."/>
            <person name="Kawagashira N."/>
            <person name="Kawashima T."/>
            <person name="Kojima M."/>
            <person name="Kondo S."/>
            <person name="Konno H."/>
            <person name="Nakano K."/>
            <person name="Ninomiya N."/>
            <person name="Nishio T."/>
            <person name="Okada M."/>
            <person name="Plessy C."/>
            <person name="Shibata K."/>
            <person name="Shiraki T."/>
            <person name="Suzuki S."/>
            <person name="Tagami M."/>
            <person name="Waki K."/>
            <person name="Watahiki A."/>
            <person name="Okamura-Oho Y."/>
            <person name="Suzuki H."/>
            <person name="Kawai J."/>
            <person name="Hayashizaki Y."/>
        </authorList>
    </citation>
    <scope>NUCLEOTIDE SEQUENCE [LARGE SCALE MRNA] (ISOFORM 1)</scope>
</reference>
<reference key="3">
    <citation type="journal article" date="2009" name="PLoS Biol.">
        <title>Lineage-specific biology revealed by a finished genome assembly of the mouse.</title>
        <authorList>
            <person name="Church D.M."/>
            <person name="Goodstadt L."/>
            <person name="Hillier L.W."/>
            <person name="Zody M.C."/>
            <person name="Goldstein S."/>
            <person name="She X."/>
            <person name="Bult C.J."/>
            <person name="Agarwala R."/>
            <person name="Cherry J.L."/>
            <person name="DiCuccio M."/>
            <person name="Hlavina W."/>
            <person name="Kapustin Y."/>
            <person name="Meric P."/>
            <person name="Maglott D."/>
            <person name="Birtle Z."/>
            <person name="Marques A.C."/>
            <person name="Graves T."/>
            <person name="Zhou S."/>
            <person name="Teague B."/>
            <person name="Potamousis K."/>
            <person name="Churas C."/>
            <person name="Place M."/>
            <person name="Herschleb J."/>
            <person name="Runnheim R."/>
            <person name="Forrest D."/>
            <person name="Amos-Landgraf J."/>
            <person name="Schwartz D.C."/>
            <person name="Cheng Z."/>
            <person name="Lindblad-Toh K."/>
            <person name="Eichler E.E."/>
            <person name="Ponting C.P."/>
        </authorList>
    </citation>
    <scope>NUCLEOTIDE SEQUENCE [LARGE SCALE GENOMIC DNA]</scope>
    <source>
        <strain>C57BL/6J</strain>
    </source>
</reference>
<reference key="4">
    <citation type="journal article" date="2006" name="Mol. Cell. Proteomics">
        <title>Transgenic mouse proteomics identifies new 14-3-3-associated proteins involved in cytoskeletal rearrangements and cell signaling.</title>
        <authorList>
            <person name="Angrand P.O."/>
            <person name="Segura I."/>
            <person name="Voelkel P."/>
            <person name="Ghidelli S."/>
            <person name="Terry R."/>
            <person name="Brajenovic M."/>
            <person name="Vintersten K."/>
            <person name="Klein R."/>
            <person name="Superti-Furga G."/>
            <person name="Drewes G."/>
            <person name="Kuster B."/>
            <person name="Bouwmeester T."/>
            <person name="Acker-Palmer A."/>
        </authorList>
    </citation>
    <scope>INTERACTION WITH YWHAZ</scope>
</reference>
<reference key="5">
    <citation type="journal article" date="2010" name="Cell">
        <title>A tissue-specific atlas of mouse protein phosphorylation and expression.</title>
        <authorList>
            <person name="Huttlin E.L."/>
            <person name="Jedrychowski M.P."/>
            <person name="Elias J.E."/>
            <person name="Goswami T."/>
            <person name="Rad R."/>
            <person name="Beausoleil S.A."/>
            <person name="Villen J."/>
            <person name="Haas W."/>
            <person name="Sowa M.E."/>
            <person name="Gygi S.P."/>
        </authorList>
    </citation>
    <scope>IDENTIFICATION BY MASS SPECTROMETRY [LARGE SCALE ANALYSIS]</scope>
    <source>
        <tissue>Brain</tissue>
    </source>
</reference>
<protein>
    <recommendedName>
        <fullName>Adenylate kinase isoenzyme 5</fullName>
        <shortName>AK 5</shortName>
        <ecNumber>2.7.4.3</ecNumber>
        <ecNumber>2.7.4.6</ecNumber>
    </recommendedName>
    <alternativeName>
        <fullName>ATP-AMP transphosphorylase 5</fullName>
    </alternativeName>
</protein>
<feature type="chain" id="PRO_0000158931" description="Adenylate kinase isoenzyme 5">
    <location>
        <begin position="1"/>
        <end position="562"/>
    </location>
</feature>
<feature type="region of interest" description="Adenylate kinase 1" evidence="2">
    <location>
        <begin position="133"/>
        <end position="316"/>
    </location>
</feature>
<feature type="region of interest" description="NMP 1" evidence="1">
    <location>
        <begin position="162"/>
        <end position="193"/>
    </location>
</feature>
<feature type="region of interest" description="LID 1" evidence="1">
    <location>
        <begin position="256"/>
        <end position="266"/>
    </location>
</feature>
<feature type="region of interest" description="Adenylate kinase 2" evidence="2">
    <location>
        <begin position="377"/>
        <end position="559"/>
    </location>
</feature>
<feature type="region of interest" description="NMP 2" evidence="1">
    <location>
        <begin position="406"/>
        <end position="435"/>
    </location>
</feature>
<feature type="region of interest" description="LID 2" evidence="1">
    <location>
        <begin position="499"/>
        <end position="509"/>
    </location>
</feature>
<feature type="binding site" evidence="1">
    <location>
        <begin position="142"/>
        <end position="147"/>
    </location>
    <ligand>
        <name>ATP</name>
        <dbReference type="ChEBI" id="CHEBI:30616"/>
        <label>1</label>
    </ligand>
</feature>
<feature type="binding site" evidence="1">
    <location>
        <position position="168"/>
    </location>
    <ligand>
        <name>AMP</name>
        <dbReference type="ChEBI" id="CHEBI:456215"/>
        <label>1</label>
    </ligand>
</feature>
<feature type="binding site" evidence="1">
    <location>
        <begin position="191"/>
        <end position="193"/>
    </location>
    <ligand>
        <name>AMP</name>
        <dbReference type="ChEBI" id="CHEBI:456215"/>
        <label>1</label>
    </ligand>
</feature>
<feature type="binding site" evidence="1">
    <location>
        <begin position="219"/>
        <end position="222"/>
    </location>
    <ligand>
        <name>AMP</name>
        <dbReference type="ChEBI" id="CHEBI:456215"/>
        <label>1</label>
    </ligand>
</feature>
<feature type="binding site" evidence="1">
    <location>
        <position position="226"/>
    </location>
    <ligand>
        <name>AMP</name>
        <dbReference type="ChEBI" id="CHEBI:456215"/>
        <label>1</label>
    </ligand>
</feature>
<feature type="binding site" evidence="1">
    <location>
        <position position="257"/>
    </location>
    <ligand>
        <name>ATP</name>
        <dbReference type="ChEBI" id="CHEBI:30616"/>
        <label>1</label>
    </ligand>
</feature>
<feature type="binding site" evidence="1">
    <location>
        <position position="263"/>
    </location>
    <ligand>
        <name>AMP</name>
        <dbReference type="ChEBI" id="CHEBI:456215"/>
        <label>1</label>
    </ligand>
</feature>
<feature type="binding site" evidence="1">
    <location>
        <position position="274"/>
    </location>
    <ligand>
        <name>AMP</name>
        <dbReference type="ChEBI" id="CHEBI:456215"/>
        <label>1</label>
    </ligand>
</feature>
<feature type="binding site" evidence="1">
    <location>
        <begin position="386"/>
        <end position="391"/>
    </location>
    <ligand>
        <name>ATP</name>
        <dbReference type="ChEBI" id="CHEBI:30616"/>
        <label>2</label>
    </ligand>
</feature>
<feature type="binding site" evidence="1">
    <location>
        <position position="407"/>
    </location>
    <ligand>
        <name>AMP</name>
        <dbReference type="ChEBI" id="CHEBI:456215"/>
        <label>2</label>
    </ligand>
</feature>
<feature type="binding site" evidence="1">
    <location>
        <position position="412"/>
    </location>
    <ligand>
        <name>AMP</name>
        <dbReference type="ChEBI" id="CHEBI:456215"/>
        <label>2</label>
    </ligand>
</feature>
<feature type="binding site" evidence="1">
    <location>
        <begin position="433"/>
        <end position="435"/>
    </location>
    <ligand>
        <name>AMP</name>
        <dbReference type="ChEBI" id="CHEBI:456215"/>
        <label>2</label>
    </ligand>
</feature>
<feature type="binding site" evidence="1">
    <location>
        <begin position="462"/>
        <end position="465"/>
    </location>
    <ligand>
        <name>AMP</name>
        <dbReference type="ChEBI" id="CHEBI:456215"/>
        <label>2</label>
    </ligand>
</feature>
<feature type="binding site" evidence="1">
    <location>
        <position position="469"/>
    </location>
    <ligand>
        <name>AMP</name>
        <dbReference type="ChEBI" id="CHEBI:456215"/>
        <label>2</label>
    </ligand>
</feature>
<feature type="binding site" evidence="1">
    <location>
        <position position="500"/>
    </location>
    <ligand>
        <name>ATP</name>
        <dbReference type="ChEBI" id="CHEBI:30616"/>
        <label>2</label>
    </ligand>
</feature>
<feature type="binding site" evidence="1">
    <location>
        <position position="506"/>
    </location>
    <ligand>
        <name>AMP</name>
        <dbReference type="ChEBI" id="CHEBI:456215"/>
        <label>2</label>
    </ligand>
</feature>
<feature type="binding site" evidence="1">
    <location>
        <position position="517"/>
    </location>
    <ligand>
        <name>AMP</name>
        <dbReference type="ChEBI" id="CHEBI:456215"/>
        <label>2</label>
    </ligand>
</feature>
<feature type="binding site" evidence="1">
    <location>
        <position position="545"/>
    </location>
    <ligand>
        <name>ATP</name>
        <dbReference type="ChEBI" id="CHEBI:30616"/>
        <label>2</label>
    </ligand>
</feature>
<feature type="splice variant" id="VSP_037880" description="In isoform 2." evidence="4">
    <location>
        <begin position="1"/>
        <end position="369"/>
    </location>
</feature>
<feature type="sequence conflict" description="In Ref. 2; AK053807." evidence="5" ref="2">
    <original>R</original>
    <variation>K</variation>
    <location>
        <position position="249"/>
    </location>
</feature>
<evidence type="ECO:0000250" key="1">
    <source>
        <dbReference type="UniProtKB" id="P00568"/>
    </source>
</evidence>
<evidence type="ECO:0000250" key="2">
    <source>
        <dbReference type="UniProtKB" id="Q9Y6K8"/>
    </source>
</evidence>
<evidence type="ECO:0000269" key="3">
    <source>
    </source>
</evidence>
<evidence type="ECO:0000303" key="4">
    <source ref="1"/>
</evidence>
<evidence type="ECO:0000305" key="5"/>
<accession>Q920P5</accession>
<name>KAD5_MOUSE</name>